<gene>
    <name evidence="1" type="primary">rnhB</name>
    <name type="ordered locus">MCAP_0542</name>
</gene>
<feature type="chain" id="PRO_0000235738" description="Ribonuclease HII">
    <location>
        <begin position="1"/>
        <end position="207"/>
    </location>
</feature>
<feature type="domain" description="RNase H type-2" evidence="2">
    <location>
        <begin position="18"/>
        <end position="207"/>
    </location>
</feature>
<feature type="binding site" evidence="1">
    <location>
        <position position="24"/>
    </location>
    <ligand>
        <name>a divalent metal cation</name>
        <dbReference type="ChEBI" id="CHEBI:60240"/>
    </ligand>
</feature>
<feature type="binding site" evidence="1">
    <location>
        <position position="25"/>
    </location>
    <ligand>
        <name>a divalent metal cation</name>
        <dbReference type="ChEBI" id="CHEBI:60240"/>
    </ligand>
</feature>
<feature type="binding site" evidence="1">
    <location>
        <position position="116"/>
    </location>
    <ligand>
        <name>a divalent metal cation</name>
        <dbReference type="ChEBI" id="CHEBI:60240"/>
    </ligand>
</feature>
<dbReference type="EC" id="3.1.26.4" evidence="1"/>
<dbReference type="EMBL" id="CP000123">
    <property type="protein sequence ID" value="ABC01661.1"/>
    <property type="molecule type" value="Genomic_DNA"/>
</dbReference>
<dbReference type="RefSeq" id="WP_011387411.1">
    <property type="nucleotide sequence ID" value="NC_007633.1"/>
</dbReference>
<dbReference type="SMR" id="Q2SRV0"/>
<dbReference type="GeneID" id="23778501"/>
<dbReference type="KEGG" id="mcp:MCAP_0542"/>
<dbReference type="HOGENOM" id="CLU_036532_3_2_14"/>
<dbReference type="PhylomeDB" id="Q2SRV0"/>
<dbReference type="Proteomes" id="UP000001928">
    <property type="component" value="Chromosome"/>
</dbReference>
<dbReference type="GO" id="GO:0005737">
    <property type="term" value="C:cytoplasm"/>
    <property type="evidence" value="ECO:0007669"/>
    <property type="project" value="UniProtKB-SubCell"/>
</dbReference>
<dbReference type="GO" id="GO:0032299">
    <property type="term" value="C:ribonuclease H2 complex"/>
    <property type="evidence" value="ECO:0007669"/>
    <property type="project" value="TreeGrafter"/>
</dbReference>
<dbReference type="GO" id="GO:0030145">
    <property type="term" value="F:manganese ion binding"/>
    <property type="evidence" value="ECO:0007669"/>
    <property type="project" value="UniProtKB-UniRule"/>
</dbReference>
<dbReference type="GO" id="GO:0003723">
    <property type="term" value="F:RNA binding"/>
    <property type="evidence" value="ECO:0007669"/>
    <property type="project" value="InterPro"/>
</dbReference>
<dbReference type="GO" id="GO:0004523">
    <property type="term" value="F:RNA-DNA hybrid ribonuclease activity"/>
    <property type="evidence" value="ECO:0007669"/>
    <property type="project" value="UniProtKB-UniRule"/>
</dbReference>
<dbReference type="GO" id="GO:0043137">
    <property type="term" value="P:DNA replication, removal of RNA primer"/>
    <property type="evidence" value="ECO:0007669"/>
    <property type="project" value="TreeGrafter"/>
</dbReference>
<dbReference type="GO" id="GO:0006298">
    <property type="term" value="P:mismatch repair"/>
    <property type="evidence" value="ECO:0007669"/>
    <property type="project" value="TreeGrafter"/>
</dbReference>
<dbReference type="CDD" id="cd07182">
    <property type="entry name" value="RNase_HII_bacteria_HII_like"/>
    <property type="match status" value="1"/>
</dbReference>
<dbReference type="Gene3D" id="3.30.420.10">
    <property type="entry name" value="Ribonuclease H-like superfamily/Ribonuclease H"/>
    <property type="match status" value="1"/>
</dbReference>
<dbReference type="HAMAP" id="MF_00052_B">
    <property type="entry name" value="RNase_HII_B"/>
    <property type="match status" value="1"/>
</dbReference>
<dbReference type="InterPro" id="IPR022898">
    <property type="entry name" value="RNase_HII"/>
</dbReference>
<dbReference type="InterPro" id="IPR001352">
    <property type="entry name" value="RNase_HII/HIII"/>
</dbReference>
<dbReference type="InterPro" id="IPR024567">
    <property type="entry name" value="RNase_HII/HIII_dom"/>
</dbReference>
<dbReference type="InterPro" id="IPR012337">
    <property type="entry name" value="RNaseH-like_sf"/>
</dbReference>
<dbReference type="InterPro" id="IPR036397">
    <property type="entry name" value="RNaseH_sf"/>
</dbReference>
<dbReference type="NCBIfam" id="NF000595">
    <property type="entry name" value="PRK00015.1-3"/>
    <property type="match status" value="1"/>
</dbReference>
<dbReference type="PANTHER" id="PTHR10954">
    <property type="entry name" value="RIBONUCLEASE H2 SUBUNIT A"/>
    <property type="match status" value="1"/>
</dbReference>
<dbReference type="PANTHER" id="PTHR10954:SF18">
    <property type="entry name" value="RIBONUCLEASE HII"/>
    <property type="match status" value="1"/>
</dbReference>
<dbReference type="Pfam" id="PF01351">
    <property type="entry name" value="RNase_HII"/>
    <property type="match status" value="1"/>
</dbReference>
<dbReference type="SUPFAM" id="SSF53098">
    <property type="entry name" value="Ribonuclease H-like"/>
    <property type="match status" value="1"/>
</dbReference>
<dbReference type="PROSITE" id="PS51975">
    <property type="entry name" value="RNASE_H_2"/>
    <property type="match status" value="1"/>
</dbReference>
<comment type="function">
    <text evidence="1">Endonuclease that specifically degrades the RNA of RNA-DNA hybrids.</text>
</comment>
<comment type="catalytic activity">
    <reaction evidence="1">
        <text>Endonucleolytic cleavage to 5'-phosphomonoester.</text>
        <dbReference type="EC" id="3.1.26.4"/>
    </reaction>
</comment>
<comment type="cofactor">
    <cofactor evidence="1">
        <name>Mn(2+)</name>
        <dbReference type="ChEBI" id="CHEBI:29035"/>
    </cofactor>
    <cofactor evidence="1">
        <name>Mg(2+)</name>
        <dbReference type="ChEBI" id="CHEBI:18420"/>
    </cofactor>
    <text evidence="1">Manganese or magnesium. Binds 1 divalent metal ion per monomer in the absence of substrate. May bind a second metal ion after substrate binding.</text>
</comment>
<comment type="subcellular location">
    <subcellularLocation>
        <location evidence="1">Cytoplasm</location>
    </subcellularLocation>
</comment>
<comment type="similarity">
    <text evidence="1">Belongs to the RNase HII family.</text>
</comment>
<proteinExistence type="inferred from homology"/>
<sequence>MINRKSFDDQIKLDHNITYLSGSDEAGRGCLAGPLVVASVILKPDYFNPLIKDSKKLNPKTRQVLFDEIIKNCLDYQIMIISSKQVDELNPLQASLLGFKTTISNLKITPDLALIDGNQNINLENIKTLSIIKGDDNSFSIACSSILAKVTRDKILDQYDQIYPNYGFKSHKGYCTKKHLLAIQKYGVLDIHRKSYKPIKKISKETS</sequence>
<reference key="1">
    <citation type="submission" date="2005-09" db="EMBL/GenBank/DDBJ databases">
        <authorList>
            <person name="Glass J.I."/>
            <person name="Lartigue C."/>
            <person name="Pfannkoch C."/>
            <person name="Baden-Tillson H."/>
            <person name="Smith H.O."/>
            <person name="Venter J.C."/>
            <person name="Roske K."/>
            <person name="Wise K.S."/>
            <person name="Calcutt M.J."/>
            <person name="Nelson W.C."/>
            <person name="Nierman W.C."/>
        </authorList>
    </citation>
    <scope>NUCLEOTIDE SEQUENCE [LARGE SCALE GENOMIC DNA]</scope>
    <source>
        <strain>California kid / ATCC 27343 / NCTC 10154</strain>
    </source>
</reference>
<name>RNH2_MYCCT</name>
<evidence type="ECO:0000255" key="1">
    <source>
        <dbReference type="HAMAP-Rule" id="MF_00052"/>
    </source>
</evidence>
<evidence type="ECO:0000255" key="2">
    <source>
        <dbReference type="PROSITE-ProRule" id="PRU01319"/>
    </source>
</evidence>
<accession>Q2SRV0</accession>
<organism>
    <name type="scientific">Mycoplasma capricolum subsp. capricolum (strain California kid / ATCC 27343 / NCTC 10154)</name>
    <dbReference type="NCBI Taxonomy" id="340047"/>
    <lineage>
        <taxon>Bacteria</taxon>
        <taxon>Bacillati</taxon>
        <taxon>Mycoplasmatota</taxon>
        <taxon>Mollicutes</taxon>
        <taxon>Mycoplasmataceae</taxon>
        <taxon>Mycoplasma</taxon>
    </lineage>
</organism>
<protein>
    <recommendedName>
        <fullName evidence="1">Ribonuclease HII</fullName>
        <shortName evidence="1">RNase HII</shortName>
        <ecNumber evidence="1">3.1.26.4</ecNumber>
    </recommendedName>
</protein>
<keyword id="KW-0963">Cytoplasm</keyword>
<keyword id="KW-0255">Endonuclease</keyword>
<keyword id="KW-0378">Hydrolase</keyword>
<keyword id="KW-0464">Manganese</keyword>
<keyword id="KW-0479">Metal-binding</keyword>
<keyword id="KW-0540">Nuclease</keyword>